<keyword id="KW-0938">Abscisic acid signaling pathway</keyword>
<keyword id="KW-0106">Calcium</keyword>
<keyword id="KW-1003">Cell membrane</keyword>
<keyword id="KW-0343">GTPase activation</keyword>
<keyword id="KW-0446">Lipid-binding</keyword>
<keyword id="KW-0472">Membrane</keyword>
<keyword id="KW-0479">Metal-binding</keyword>
<keyword id="KW-0539">Nucleus</keyword>
<keyword id="KW-1185">Reference proteome</keyword>
<evidence type="ECO:0000250" key="1">
    <source>
        <dbReference type="UniProtKB" id="Q9FHP6"/>
    </source>
</evidence>
<evidence type="ECO:0000250" key="2">
    <source>
        <dbReference type="UniProtKB" id="Q9LVH4"/>
    </source>
</evidence>
<evidence type="ECO:0000255" key="3">
    <source>
        <dbReference type="PROSITE-ProRule" id="PRU00041"/>
    </source>
</evidence>
<evidence type="ECO:0000269" key="4">
    <source>
    </source>
</evidence>
<evidence type="ECO:0000269" key="5">
    <source>
    </source>
</evidence>
<evidence type="ECO:0000303" key="6">
    <source>
    </source>
</evidence>
<evidence type="ECO:0000305" key="7">
    <source>
    </source>
</evidence>
<evidence type="ECO:0000312" key="8">
    <source>
        <dbReference type="Araport" id="AT1G70790"/>
    </source>
</evidence>
<evidence type="ECO:0000312" key="9">
    <source>
        <dbReference type="EMBL" id="AAG52327.1"/>
    </source>
</evidence>
<evidence type="ECO:0000312" key="10">
    <source>
        <dbReference type="Proteomes" id="UP000006548"/>
    </source>
</evidence>
<gene>
    <name evidence="6" type="primary">CAR9</name>
    <name evidence="8" type="ordered locus">At1g70790</name>
    <name evidence="9" type="ORF">F15H11.4</name>
    <name evidence="9" type="ORF">F5A18.3</name>
</gene>
<feature type="chain" id="PRO_0000433319" description="Protein C2-DOMAIN ABA-RELATED 9">
    <location>
        <begin position="1"/>
        <end position="185"/>
    </location>
</feature>
<feature type="domain" description="C2" evidence="3">
    <location>
        <begin position="1"/>
        <end position="104"/>
    </location>
</feature>
<feature type="binding site" evidence="2">
    <location>
        <position position="22"/>
    </location>
    <ligand>
        <name>Ca(2+)</name>
        <dbReference type="ChEBI" id="CHEBI:29108"/>
        <label>1</label>
    </ligand>
</feature>
<feature type="binding site" evidence="2">
    <location>
        <position position="23"/>
    </location>
    <ligand>
        <name>Ca(2+)</name>
        <dbReference type="ChEBI" id="CHEBI:29108"/>
        <label>1</label>
    </ligand>
</feature>
<feature type="binding site" evidence="2">
    <location>
        <position position="23"/>
    </location>
    <ligand>
        <name>Ca(2+)</name>
        <dbReference type="ChEBI" id="CHEBI:29108"/>
        <label>2</label>
    </ligand>
</feature>
<feature type="binding site" evidence="2">
    <location>
        <position position="28"/>
    </location>
    <ligand>
        <name>Ca(2+)</name>
        <dbReference type="ChEBI" id="CHEBI:29108"/>
        <label>2</label>
    </ligand>
</feature>
<feature type="binding site" evidence="2">
    <location>
        <position position="74"/>
    </location>
    <ligand>
        <name>Ca(2+)</name>
        <dbReference type="ChEBI" id="CHEBI:29108"/>
        <label>1</label>
    </ligand>
</feature>
<feature type="binding site" evidence="2">
    <location>
        <position position="74"/>
    </location>
    <ligand>
        <name>Ca(2+)</name>
        <dbReference type="ChEBI" id="CHEBI:29108"/>
        <label>2</label>
    </ligand>
</feature>
<feature type="binding site" evidence="2">
    <location>
        <position position="75"/>
    </location>
    <ligand>
        <name>Ca(2+)</name>
        <dbReference type="ChEBI" id="CHEBI:29108"/>
        <label>2</label>
    </ligand>
</feature>
<feature type="binding site" evidence="2">
    <location>
        <position position="76"/>
    </location>
    <ligand>
        <name>Ca(2+)</name>
        <dbReference type="ChEBI" id="CHEBI:29108"/>
        <label>1</label>
    </ligand>
</feature>
<feature type="binding site" evidence="2">
    <location>
        <position position="76"/>
    </location>
    <ligand>
        <name>Ca(2+)</name>
        <dbReference type="ChEBI" id="CHEBI:29108"/>
        <label>2</label>
    </ligand>
</feature>
<feature type="binding site" evidence="2">
    <location>
        <position position="82"/>
    </location>
    <ligand>
        <name>Ca(2+)</name>
        <dbReference type="ChEBI" id="CHEBI:29108"/>
        <label>1</label>
    </ligand>
</feature>
<dbReference type="EMBL" id="AC008148">
    <property type="protein sequence ID" value="AAD55494.1"/>
    <property type="molecule type" value="Genomic_DNA"/>
</dbReference>
<dbReference type="EMBL" id="AC011663">
    <property type="protein sequence ID" value="AAG52327.1"/>
    <property type="molecule type" value="Genomic_DNA"/>
</dbReference>
<dbReference type="EMBL" id="CP002684">
    <property type="protein sequence ID" value="AEE35116.1"/>
    <property type="molecule type" value="Genomic_DNA"/>
</dbReference>
<dbReference type="EMBL" id="CP002684">
    <property type="protein sequence ID" value="AEE35117.1"/>
    <property type="molecule type" value="Genomic_DNA"/>
</dbReference>
<dbReference type="EMBL" id="CP002684">
    <property type="protein sequence ID" value="ANM60806.1"/>
    <property type="molecule type" value="Genomic_DNA"/>
</dbReference>
<dbReference type="EMBL" id="BT026107">
    <property type="protein sequence ID" value="ABG48463.1"/>
    <property type="molecule type" value="mRNA"/>
</dbReference>
<dbReference type="EMBL" id="AY085364">
    <property type="protein sequence ID" value="AAM62594.1"/>
    <property type="molecule type" value="mRNA"/>
</dbReference>
<dbReference type="PIR" id="E96732">
    <property type="entry name" value="E96732"/>
</dbReference>
<dbReference type="RefSeq" id="NP_001319362.1">
    <property type="nucleotide sequence ID" value="NM_001334479.1"/>
</dbReference>
<dbReference type="RefSeq" id="NP_565001.1">
    <property type="nucleotide sequence ID" value="NM_105747.3"/>
</dbReference>
<dbReference type="RefSeq" id="NP_849874.1">
    <property type="nucleotide sequence ID" value="NM_179543.3"/>
</dbReference>
<dbReference type="SMR" id="Q9S7J9"/>
<dbReference type="FunCoup" id="Q9S7J9">
    <property type="interactions" value="26"/>
</dbReference>
<dbReference type="STRING" id="3702.Q9S7J9"/>
<dbReference type="PaxDb" id="3702-AT1G70790.1"/>
<dbReference type="ProteomicsDB" id="240250"/>
<dbReference type="EnsemblPlants" id="AT1G70790.1">
    <property type="protein sequence ID" value="AT1G70790.1"/>
    <property type="gene ID" value="AT1G70790"/>
</dbReference>
<dbReference type="EnsemblPlants" id="AT1G70790.2">
    <property type="protein sequence ID" value="AT1G70790.2"/>
    <property type="gene ID" value="AT1G70790"/>
</dbReference>
<dbReference type="EnsemblPlants" id="AT1G70790.3">
    <property type="protein sequence ID" value="AT1G70790.3"/>
    <property type="gene ID" value="AT1G70790"/>
</dbReference>
<dbReference type="GeneID" id="843416"/>
<dbReference type="Gramene" id="AT1G70790.1">
    <property type="protein sequence ID" value="AT1G70790.1"/>
    <property type="gene ID" value="AT1G70790"/>
</dbReference>
<dbReference type="Gramene" id="AT1G70790.2">
    <property type="protein sequence ID" value="AT1G70790.2"/>
    <property type="gene ID" value="AT1G70790"/>
</dbReference>
<dbReference type="Gramene" id="AT1G70790.3">
    <property type="protein sequence ID" value="AT1G70790.3"/>
    <property type="gene ID" value="AT1G70790"/>
</dbReference>
<dbReference type="KEGG" id="ath:AT1G70790"/>
<dbReference type="Araport" id="AT1G70790"/>
<dbReference type="TAIR" id="AT1G70790">
    <property type="gene designation" value="CAR9"/>
</dbReference>
<dbReference type="eggNOG" id="KOG1030">
    <property type="taxonomic scope" value="Eukaryota"/>
</dbReference>
<dbReference type="HOGENOM" id="CLU_106037_0_0_1"/>
<dbReference type="InParanoid" id="Q9S7J9"/>
<dbReference type="OMA" id="ADESHMV"/>
<dbReference type="OrthoDB" id="73919at2759"/>
<dbReference type="PhylomeDB" id="Q9S7J9"/>
<dbReference type="PRO" id="PR:Q9S7J9"/>
<dbReference type="Proteomes" id="UP000006548">
    <property type="component" value="Chromosome 1"/>
</dbReference>
<dbReference type="ExpressionAtlas" id="Q9S7J9">
    <property type="expression patterns" value="baseline and differential"/>
</dbReference>
<dbReference type="GO" id="GO:0005634">
    <property type="term" value="C:nucleus"/>
    <property type="evidence" value="ECO:0000314"/>
    <property type="project" value="UniProtKB"/>
</dbReference>
<dbReference type="GO" id="GO:0005886">
    <property type="term" value="C:plasma membrane"/>
    <property type="evidence" value="ECO:0000314"/>
    <property type="project" value="UniProtKB"/>
</dbReference>
<dbReference type="GO" id="GO:0005096">
    <property type="term" value="F:GTPase activator activity"/>
    <property type="evidence" value="ECO:0000250"/>
    <property type="project" value="UniProtKB"/>
</dbReference>
<dbReference type="GO" id="GO:0046872">
    <property type="term" value="F:metal ion binding"/>
    <property type="evidence" value="ECO:0007669"/>
    <property type="project" value="UniProtKB-KW"/>
</dbReference>
<dbReference type="GO" id="GO:0005543">
    <property type="term" value="F:phospholipid binding"/>
    <property type="evidence" value="ECO:0000250"/>
    <property type="project" value="UniProtKB"/>
</dbReference>
<dbReference type="GO" id="GO:0009738">
    <property type="term" value="P:abscisic acid-activated signaling pathway"/>
    <property type="evidence" value="ECO:0007669"/>
    <property type="project" value="UniProtKB-KW"/>
</dbReference>
<dbReference type="GO" id="GO:0009789">
    <property type="term" value="P:positive regulation of abscisic acid-activated signaling pathway"/>
    <property type="evidence" value="ECO:0000315"/>
    <property type="project" value="UniProtKB"/>
</dbReference>
<dbReference type="GO" id="GO:0043547">
    <property type="term" value="P:positive regulation of GTPase activity"/>
    <property type="evidence" value="ECO:0000250"/>
    <property type="project" value="UniProtKB"/>
</dbReference>
<dbReference type="GO" id="GO:0009737">
    <property type="term" value="P:response to abscisic acid"/>
    <property type="evidence" value="ECO:0000315"/>
    <property type="project" value="UniProtKB"/>
</dbReference>
<dbReference type="CDD" id="cd04038">
    <property type="entry name" value="C2_ArfGAP"/>
    <property type="match status" value="1"/>
</dbReference>
<dbReference type="Gene3D" id="2.60.40.150">
    <property type="entry name" value="C2 domain"/>
    <property type="match status" value="1"/>
</dbReference>
<dbReference type="InterPro" id="IPR000008">
    <property type="entry name" value="C2_dom"/>
</dbReference>
<dbReference type="InterPro" id="IPR035892">
    <property type="entry name" value="C2_domain_sf"/>
</dbReference>
<dbReference type="InterPro" id="IPR044562">
    <property type="entry name" value="CAR1-11"/>
</dbReference>
<dbReference type="PANTHER" id="PTHR45933">
    <property type="entry name" value="PROTEIN C2-DOMAIN ABA-RELATED 4"/>
    <property type="match status" value="1"/>
</dbReference>
<dbReference type="PANTHER" id="PTHR45933:SF12">
    <property type="entry name" value="PROTEIN C2-DOMAIN ABA-RELATED 9"/>
    <property type="match status" value="1"/>
</dbReference>
<dbReference type="Pfam" id="PF00168">
    <property type="entry name" value="C2"/>
    <property type="match status" value="1"/>
</dbReference>
<dbReference type="SMART" id="SM00239">
    <property type="entry name" value="C2"/>
    <property type="match status" value="1"/>
</dbReference>
<dbReference type="SUPFAM" id="SSF49562">
    <property type="entry name" value="C2 domain (Calcium/lipid-binding domain, CaLB)"/>
    <property type="match status" value="1"/>
</dbReference>
<dbReference type="PROSITE" id="PS50004">
    <property type="entry name" value="C2"/>
    <property type="match status" value="1"/>
</dbReference>
<organism evidence="10">
    <name type="scientific">Arabidopsis thaliana</name>
    <name type="common">Mouse-ear cress</name>
    <dbReference type="NCBI Taxonomy" id="3702"/>
    <lineage>
        <taxon>Eukaryota</taxon>
        <taxon>Viridiplantae</taxon>
        <taxon>Streptophyta</taxon>
        <taxon>Embryophyta</taxon>
        <taxon>Tracheophyta</taxon>
        <taxon>Spermatophyta</taxon>
        <taxon>Magnoliopsida</taxon>
        <taxon>eudicotyledons</taxon>
        <taxon>Gunneridae</taxon>
        <taxon>Pentapetalae</taxon>
        <taxon>rosids</taxon>
        <taxon>malvids</taxon>
        <taxon>Brassicales</taxon>
        <taxon>Brassicaceae</taxon>
        <taxon>Camelineae</taxon>
        <taxon>Arabidopsis</taxon>
    </lineage>
</organism>
<name>CAR9_ARATH</name>
<accession>Q9S7J9</accession>
<comment type="function">
    <text evidence="2 4 5">Stimulates the GTPase/ATPase activities of Obg-like ATPases (By similarity). Mediates the transient calcium-dependent interaction of PYR/PYL/RCAR abscisic acid (ABA) receptors with the plasma membrane and thus regulates ABA sensitivity (PubMed:25465408, PubMed:31102784).</text>
</comment>
<comment type="cofactor">
    <cofactor evidence="3">
        <name>Ca(2+)</name>
        <dbReference type="ChEBI" id="CHEBI:29108"/>
    </cofactor>
</comment>
<comment type="subunit">
    <text evidence="1 5">Binds to PYR/PYL/RCAR abscisic acid intracellular receptors in an ABA-independent manner, both at the plasma membrane and in the nucleus (By similarity). Interacts with LOT1 in the nuleus; this interaction is repressed by abscisic acid (ABA) and is sensitive to calcium ion Ca(2+), leading to free CAR9 accumulation at the plasma membrane (PubMed:31102784).</text>
</comment>
<comment type="subcellular location">
    <subcellularLocation>
        <location evidence="5">Cell membrane</location>
    </subcellularLocation>
    <subcellularLocation>
        <location evidence="5">Nucleus</location>
    </subcellularLocation>
    <text evidence="5">Localization at the plasma membrane increases upon abscisic acid (ABA) treatment, at the expense of nuclear localization.</text>
</comment>
<comment type="induction">
    <text evidence="5">Induced by abscisic acid (ABA).</text>
</comment>
<comment type="disruption phenotype">
    <text evidence="4 5">Reduced sensitivity to abscisic acid (ABA) in single and doule mutant lot1 car9 (PubMed:31102784). When associated with disruption in CAR1, CAR4 and CAR5 genes, altered sensitivity to ABA during seedling establishment and root growth regulation (PubMed:25465408).</text>
</comment>
<comment type="similarity">
    <text evidence="7">Belongs to the plant CAR protein family.</text>
</comment>
<proteinExistence type="evidence at protein level"/>
<protein>
    <recommendedName>
        <fullName evidence="6">Protein C2-DOMAIN ABA-RELATED 9</fullName>
    </recommendedName>
</protein>
<reference key="1">
    <citation type="journal article" date="2000" name="Nature">
        <title>Sequence and analysis of chromosome 1 of the plant Arabidopsis thaliana.</title>
        <authorList>
            <person name="Theologis A."/>
            <person name="Ecker J.R."/>
            <person name="Palm C.J."/>
            <person name="Federspiel N.A."/>
            <person name="Kaul S."/>
            <person name="White O."/>
            <person name="Alonso J."/>
            <person name="Altafi H."/>
            <person name="Araujo R."/>
            <person name="Bowman C.L."/>
            <person name="Brooks S.Y."/>
            <person name="Buehler E."/>
            <person name="Chan A."/>
            <person name="Chao Q."/>
            <person name="Chen H."/>
            <person name="Cheuk R.F."/>
            <person name="Chin C.W."/>
            <person name="Chung M.K."/>
            <person name="Conn L."/>
            <person name="Conway A.B."/>
            <person name="Conway A.R."/>
            <person name="Creasy T.H."/>
            <person name="Dewar K."/>
            <person name="Dunn P."/>
            <person name="Etgu P."/>
            <person name="Feldblyum T.V."/>
            <person name="Feng J.-D."/>
            <person name="Fong B."/>
            <person name="Fujii C.Y."/>
            <person name="Gill J.E."/>
            <person name="Goldsmith A.D."/>
            <person name="Haas B."/>
            <person name="Hansen N.F."/>
            <person name="Hughes B."/>
            <person name="Huizar L."/>
            <person name="Hunter J.L."/>
            <person name="Jenkins J."/>
            <person name="Johnson-Hopson C."/>
            <person name="Khan S."/>
            <person name="Khaykin E."/>
            <person name="Kim C.J."/>
            <person name="Koo H.L."/>
            <person name="Kremenetskaia I."/>
            <person name="Kurtz D.B."/>
            <person name="Kwan A."/>
            <person name="Lam B."/>
            <person name="Langin-Hooper S."/>
            <person name="Lee A."/>
            <person name="Lee J.M."/>
            <person name="Lenz C.A."/>
            <person name="Li J.H."/>
            <person name="Li Y.-P."/>
            <person name="Lin X."/>
            <person name="Liu S.X."/>
            <person name="Liu Z.A."/>
            <person name="Luros J.S."/>
            <person name="Maiti R."/>
            <person name="Marziali A."/>
            <person name="Militscher J."/>
            <person name="Miranda M."/>
            <person name="Nguyen M."/>
            <person name="Nierman W.C."/>
            <person name="Osborne B.I."/>
            <person name="Pai G."/>
            <person name="Peterson J."/>
            <person name="Pham P.K."/>
            <person name="Rizzo M."/>
            <person name="Rooney T."/>
            <person name="Rowley D."/>
            <person name="Sakano H."/>
            <person name="Salzberg S.L."/>
            <person name="Schwartz J.R."/>
            <person name="Shinn P."/>
            <person name="Southwick A.M."/>
            <person name="Sun H."/>
            <person name="Tallon L.J."/>
            <person name="Tambunga G."/>
            <person name="Toriumi M.J."/>
            <person name="Town C.D."/>
            <person name="Utterback T."/>
            <person name="Van Aken S."/>
            <person name="Vaysberg M."/>
            <person name="Vysotskaia V.S."/>
            <person name="Walker M."/>
            <person name="Wu D."/>
            <person name="Yu G."/>
            <person name="Fraser C.M."/>
            <person name="Venter J.C."/>
            <person name="Davis R.W."/>
        </authorList>
    </citation>
    <scope>NUCLEOTIDE SEQUENCE [LARGE SCALE GENOMIC DNA]</scope>
    <source>
        <strain>cv. Columbia</strain>
    </source>
</reference>
<reference key="2">
    <citation type="journal article" date="2017" name="Plant J.">
        <title>Araport11: a complete reannotation of the Arabidopsis thaliana reference genome.</title>
        <authorList>
            <person name="Cheng C.Y."/>
            <person name="Krishnakumar V."/>
            <person name="Chan A.P."/>
            <person name="Thibaud-Nissen F."/>
            <person name="Schobel S."/>
            <person name="Town C.D."/>
        </authorList>
    </citation>
    <scope>GENOME REANNOTATION</scope>
    <source>
        <strain>cv. Columbia</strain>
    </source>
</reference>
<reference key="3">
    <citation type="submission" date="2006-07" db="EMBL/GenBank/DDBJ databases">
        <title>Arabidopsis ORF clones.</title>
        <authorList>
            <person name="Kim C.J."/>
            <person name="Chen H."/>
            <person name="Quinitio C."/>
            <person name="Shinn P."/>
            <person name="Ecker J.R."/>
        </authorList>
    </citation>
    <scope>NUCLEOTIDE SEQUENCE [LARGE SCALE MRNA]</scope>
    <source>
        <strain>cv. Columbia</strain>
    </source>
</reference>
<reference key="4">
    <citation type="submission" date="2002-03" db="EMBL/GenBank/DDBJ databases">
        <title>Full-length cDNA from Arabidopsis thaliana.</title>
        <authorList>
            <person name="Brover V.V."/>
            <person name="Troukhan M.E."/>
            <person name="Alexandrov N.A."/>
            <person name="Lu Y.-P."/>
            <person name="Flavell R.B."/>
            <person name="Feldmann K.A."/>
        </authorList>
    </citation>
    <scope>NUCLEOTIDE SEQUENCE [LARGE SCALE MRNA]</scope>
</reference>
<reference key="5">
    <citation type="journal article" date="2014" name="Plant Cell">
        <title>C2-domain abscisic acid-related proteins mediate the interaction of PYR/PYL/RCAR abscisic acid receptors with the plasma membrane and regulate abscisic acid sensitivity in Arabidopsis.</title>
        <authorList>
            <person name="Rodriguez L."/>
            <person name="Gonzalez-Guzman M."/>
            <person name="Diaz M."/>
            <person name="Rodrigues A."/>
            <person name="Izquierdo-Garcia A.C."/>
            <person name="Peirats-Llobet M."/>
            <person name="Fernandez M.A."/>
            <person name="Antoni R."/>
            <person name="Fernandez D."/>
            <person name="Marquez J.A."/>
            <person name="Mulet J.M."/>
            <person name="Albert A."/>
            <person name="Rodriguez P.L."/>
        </authorList>
    </citation>
    <scope>FUNCTION</scope>
    <scope>DISRUPTION PHENOTYPE</scope>
    <scope>GENE FAMILY</scope>
    <scope>NOMENCLATURE</scope>
</reference>
<reference key="6">
    <citation type="journal article" date="2019" name="Mol. Plant">
        <title>LOWER TEMPERATURE 1 enhances ABA responses and plant drought tolerance by modulating the stability and localization of C2-domain ABA-related proteins in Arabidopsis.</title>
        <authorList>
            <person name="Qin T."/>
            <person name="Tian Q."/>
            <person name="Wang G."/>
            <person name="Xiong L."/>
        </authorList>
    </citation>
    <scope>FUNCTION</scope>
    <scope>DISRUPTION PHENOTYPE</scope>
    <scope>INTERACTION WITH LOT1</scope>
    <scope>SUBCELLULAR LOCATION</scope>
    <scope>INDUCTION BY ABSCISIC ACID</scope>
    <source>
        <strain>cv. Columbia</strain>
    </source>
</reference>
<sequence length="185" mass="21054">MEDKPLGILRVHVKRGINLAIRDATTSDPYVVITLANQKLKTRVINNNCNPVWNEQLTLSIKDVNDPIRLTVFDKDRFSGDDKMGDAEIDFRPFLEAHQMELDFQKLPNGCAIKRIRPGRTNCLAEESSITWSNGKIMQEMILRLKNVECGEVELMLEWTDGPGCKGLGREGSKKTPWMPTKRLD</sequence>